<reference key="1">
    <citation type="submission" date="2006-10" db="EMBL/GenBank/DDBJ databases">
        <authorList>
            <consortium name="Sanger Xenopus tropicalis EST/cDNA project"/>
        </authorList>
    </citation>
    <scope>NUCLEOTIDE SEQUENCE [LARGE SCALE MRNA]</scope>
    <source>
        <tissue>Egg</tissue>
    </source>
</reference>
<reference key="2">
    <citation type="submission" date="2007-03" db="EMBL/GenBank/DDBJ databases">
        <authorList>
            <consortium name="NIH - Xenopus Gene Collection (XGC) project"/>
        </authorList>
    </citation>
    <scope>NUCLEOTIDE SEQUENCE [LARGE SCALE MRNA]</scope>
    <source>
        <tissue>Embryo</tissue>
    </source>
</reference>
<organism>
    <name type="scientific">Xenopus tropicalis</name>
    <name type="common">Western clawed frog</name>
    <name type="synonym">Silurana tropicalis</name>
    <dbReference type="NCBI Taxonomy" id="8364"/>
    <lineage>
        <taxon>Eukaryota</taxon>
        <taxon>Metazoa</taxon>
        <taxon>Chordata</taxon>
        <taxon>Craniata</taxon>
        <taxon>Vertebrata</taxon>
        <taxon>Euteleostomi</taxon>
        <taxon>Amphibia</taxon>
        <taxon>Batrachia</taxon>
        <taxon>Anura</taxon>
        <taxon>Pipoidea</taxon>
        <taxon>Pipidae</taxon>
        <taxon>Xenopodinae</taxon>
        <taxon>Xenopus</taxon>
        <taxon>Silurana</taxon>
    </lineage>
</organism>
<accession>Q28FB9</accession>
<proteinExistence type="evidence at transcript level"/>
<feature type="chain" id="PRO_0000378582" description="THO complex subunit 4">
    <location>
        <begin position="1"/>
        <end position="260"/>
    </location>
</feature>
<feature type="domain" description="RRM" evidence="2">
    <location>
        <begin position="109"/>
        <end position="186"/>
    </location>
</feature>
<feature type="region of interest" description="Disordered" evidence="3">
    <location>
        <begin position="1"/>
        <end position="89"/>
    </location>
</feature>
<feature type="region of interest" description="Disordered" evidence="3">
    <location>
        <begin position="189"/>
        <end position="260"/>
    </location>
</feature>
<feature type="compositionally biased region" description="Basic and acidic residues" evidence="3">
    <location>
        <begin position="1"/>
        <end position="14"/>
    </location>
</feature>
<feature type="compositionally biased region" description="Gly residues" evidence="3">
    <location>
        <begin position="24"/>
        <end position="62"/>
    </location>
</feature>
<feature type="compositionally biased region" description="Polar residues" evidence="3">
    <location>
        <begin position="189"/>
        <end position="199"/>
    </location>
</feature>
<feature type="compositionally biased region" description="Basic residues" evidence="3">
    <location>
        <begin position="220"/>
        <end position="232"/>
    </location>
</feature>
<protein>
    <recommendedName>
        <fullName>THO complex subunit 4</fullName>
        <shortName>Tho4</shortName>
    </recommendedName>
    <alternativeName>
        <fullName>Aly/REF export factor</fullName>
    </alternativeName>
</protein>
<gene>
    <name type="primary">alyref</name>
    <name type="synonym">thoc4</name>
    <name type="ORF">TEgg022b23.1</name>
</gene>
<name>THOC4_XENTR</name>
<dbReference type="EMBL" id="CR762045">
    <property type="protein sequence ID" value="CAJ81934.1"/>
    <property type="molecule type" value="mRNA"/>
</dbReference>
<dbReference type="EMBL" id="BC135842">
    <property type="protein sequence ID" value="AAI35843.1"/>
    <property type="molecule type" value="mRNA"/>
</dbReference>
<dbReference type="RefSeq" id="NP_001017027.1">
    <property type="nucleotide sequence ID" value="NM_001017027.2"/>
</dbReference>
<dbReference type="BMRB" id="Q28FB9"/>
<dbReference type="SMR" id="Q28FB9"/>
<dbReference type="FunCoup" id="Q28FB9">
    <property type="interactions" value="3211"/>
</dbReference>
<dbReference type="STRING" id="8364.ENSXETP00000001902"/>
<dbReference type="PaxDb" id="8364-ENSXETP00000011893"/>
<dbReference type="DNASU" id="549781"/>
<dbReference type="GeneID" id="549781"/>
<dbReference type="KEGG" id="xtr:549781"/>
<dbReference type="AGR" id="Xenbase:XB-GENE-973553"/>
<dbReference type="CTD" id="10189"/>
<dbReference type="Xenbase" id="XB-GENE-973553">
    <property type="gene designation" value="alyref"/>
</dbReference>
<dbReference type="eggNOG" id="KOG0533">
    <property type="taxonomic scope" value="Eukaryota"/>
</dbReference>
<dbReference type="InParanoid" id="Q28FB9"/>
<dbReference type="OMA" id="RNDYPRD"/>
<dbReference type="OrthoDB" id="1049195at2759"/>
<dbReference type="PhylomeDB" id="Q28FB9"/>
<dbReference type="TreeFam" id="TF313312"/>
<dbReference type="Reactome" id="R-XTR-72163">
    <property type="pathway name" value="mRNA Splicing - Major Pathway"/>
</dbReference>
<dbReference type="Proteomes" id="UP000008143">
    <property type="component" value="Chromosome 10"/>
</dbReference>
<dbReference type="Bgee" id="ENSXETG00000005391">
    <property type="expression patterns" value="Expressed in gastrula and 32 other cell types or tissues"/>
</dbReference>
<dbReference type="GO" id="GO:0005737">
    <property type="term" value="C:cytoplasm"/>
    <property type="evidence" value="ECO:0000250"/>
    <property type="project" value="UniProtKB"/>
</dbReference>
<dbReference type="GO" id="GO:0016607">
    <property type="term" value="C:nuclear speck"/>
    <property type="evidence" value="ECO:0007669"/>
    <property type="project" value="UniProtKB-SubCell"/>
</dbReference>
<dbReference type="GO" id="GO:0005634">
    <property type="term" value="C:nucleus"/>
    <property type="evidence" value="ECO:0000250"/>
    <property type="project" value="UniProtKB"/>
</dbReference>
<dbReference type="GO" id="GO:0062153">
    <property type="term" value="F:C5-methylcytidine-containing RNA reader activity"/>
    <property type="evidence" value="ECO:0000250"/>
    <property type="project" value="UniProtKB"/>
</dbReference>
<dbReference type="GO" id="GO:0003723">
    <property type="term" value="F:RNA binding"/>
    <property type="evidence" value="ECO:0007669"/>
    <property type="project" value="UniProtKB-KW"/>
</dbReference>
<dbReference type="GO" id="GO:0006397">
    <property type="term" value="P:mRNA processing"/>
    <property type="evidence" value="ECO:0007669"/>
    <property type="project" value="UniProtKB-KW"/>
</dbReference>
<dbReference type="GO" id="GO:0051028">
    <property type="term" value="P:mRNA transport"/>
    <property type="evidence" value="ECO:0007669"/>
    <property type="project" value="UniProtKB-KW"/>
</dbReference>
<dbReference type="GO" id="GO:0006405">
    <property type="term" value="P:RNA export from nucleus"/>
    <property type="evidence" value="ECO:0000250"/>
    <property type="project" value="UniProtKB"/>
</dbReference>
<dbReference type="GO" id="GO:0008380">
    <property type="term" value="P:RNA splicing"/>
    <property type="evidence" value="ECO:0007669"/>
    <property type="project" value="UniProtKB-KW"/>
</dbReference>
<dbReference type="CDD" id="cd12680">
    <property type="entry name" value="RRM_THOC4"/>
    <property type="match status" value="1"/>
</dbReference>
<dbReference type="FunFam" id="3.30.70.330:FF:000273">
    <property type="entry name" value="THO complex subunit 4"/>
    <property type="match status" value="1"/>
</dbReference>
<dbReference type="Gene3D" id="3.30.70.330">
    <property type="match status" value="1"/>
</dbReference>
<dbReference type="InterPro" id="IPR051229">
    <property type="entry name" value="ALYREF_mRNA_export"/>
</dbReference>
<dbReference type="InterPro" id="IPR025715">
    <property type="entry name" value="FoP_C"/>
</dbReference>
<dbReference type="InterPro" id="IPR012677">
    <property type="entry name" value="Nucleotide-bd_a/b_plait_sf"/>
</dbReference>
<dbReference type="InterPro" id="IPR035979">
    <property type="entry name" value="RBD_domain_sf"/>
</dbReference>
<dbReference type="InterPro" id="IPR000504">
    <property type="entry name" value="RRM_dom"/>
</dbReference>
<dbReference type="PANTHER" id="PTHR19965">
    <property type="entry name" value="RNA AND EXPORT FACTOR BINDING PROTEIN"/>
    <property type="match status" value="1"/>
</dbReference>
<dbReference type="PANTHER" id="PTHR19965:SF82">
    <property type="entry name" value="THO COMPLEX SUBUNIT 4"/>
    <property type="match status" value="1"/>
</dbReference>
<dbReference type="Pfam" id="PF13865">
    <property type="entry name" value="FoP_duplication"/>
    <property type="match status" value="1"/>
</dbReference>
<dbReference type="Pfam" id="PF00076">
    <property type="entry name" value="RRM_1"/>
    <property type="match status" value="1"/>
</dbReference>
<dbReference type="SMART" id="SM01218">
    <property type="entry name" value="FoP_duplication"/>
    <property type="match status" value="1"/>
</dbReference>
<dbReference type="SMART" id="SM00360">
    <property type="entry name" value="RRM"/>
    <property type="match status" value="1"/>
</dbReference>
<dbReference type="SUPFAM" id="SSF54928">
    <property type="entry name" value="RNA-binding domain, RBD"/>
    <property type="match status" value="1"/>
</dbReference>
<dbReference type="PROSITE" id="PS50102">
    <property type="entry name" value="RRM"/>
    <property type="match status" value="1"/>
</dbReference>
<evidence type="ECO:0000250" key="1">
    <source>
        <dbReference type="UniProtKB" id="Q86V81"/>
    </source>
</evidence>
<evidence type="ECO:0000255" key="2">
    <source>
        <dbReference type="PROSITE-ProRule" id="PRU00176"/>
    </source>
</evidence>
<evidence type="ECO:0000256" key="3">
    <source>
        <dbReference type="SAM" id="MobiDB-lite"/>
    </source>
</evidence>
<evidence type="ECO:0000305" key="4"/>
<keyword id="KW-0143">Chaperone</keyword>
<keyword id="KW-0963">Cytoplasm</keyword>
<keyword id="KW-0507">mRNA processing</keyword>
<keyword id="KW-0508">mRNA splicing</keyword>
<keyword id="KW-0509">mRNA transport</keyword>
<keyword id="KW-0539">Nucleus</keyword>
<keyword id="KW-1185">Reference proteome</keyword>
<keyword id="KW-0694">RNA-binding</keyword>
<keyword id="KW-0813">Transport</keyword>
<comment type="function">
    <text evidence="1">Functions as an mRNA export adapter; component of the transcription/export (TREX) complex which is thought to couple mRNA transcription, processing and nuclear export, and specifically associates with spliced mRNA and not with unspliced pre-mRNA. TREX is recruited to spliced mRNAs by a transcription-independent mechanism, binds to mRNA upstream of the exon-junction complex (EJC) and is recruited in a splicing- and cap-dependent manner to a region near the 5' end of the mRNA where it functions in mRNA export to the cytoplasm via the TAP/NXF1 pathway. Involved in the nuclear export of intronless mRNA; proposed to be recruited to intronless mRNA by ATP-bound DDX39B. Plays a key role in mRNP recognition and mRNA packaging by bridging the mRNP-bound EJC and the TREX core complex. TREX recruitment occurs via an interaction between ALYREF/THOC4 and the cap-binding protein NCBP1. Required for TREX complex assembly and for linking DDX39B to the cap-binding complex (CBC). Binds mRNA which is thought to be transferred to the NXF1-NXT1 heterodimer for export (TAP/NXF1 pathway). In conjunction with THOC5 functions in NXF1-NXT1 mediated nuclear export of HSP70 mRNA; both proteins enhance the RNA binding activity of NXF1 and are required for NXF1 localization to the nuclear rim. Involved in mRNA export of C5-methylcytosine (m5C)-containing mRNAs: specifically recognizes and binds m5C mRNAs and mediates their nucleo-cytoplasmic shuttling. Acts as a chaperone and promotes the dimerization of transcription factors containing basic leucine zipper (bZIP) domains and thereby promotes transcriptional activation. Involved in transcription elongation and genome stability (By similarity).</text>
</comment>
<comment type="subunit">
    <text evidence="1">Component of the transcription/export (TREX) complex; TREX seems to have a dynamic structure involving ATP-dependent remodeling (By similarity).</text>
</comment>
<comment type="subcellular location">
    <subcellularLocation>
        <location evidence="1">Nucleus</location>
    </subcellularLocation>
    <subcellularLocation>
        <location evidence="1">Nucleus speckle</location>
    </subcellularLocation>
    <subcellularLocation>
        <location evidence="1">Cytoplasm</location>
    </subcellularLocation>
    <text evidence="1">Travels to the cytoplasm as part of the exon junction complex (EJC) bound to mRNA.</text>
</comment>
<comment type="similarity">
    <text evidence="4">Belongs to the ALYREF family.</text>
</comment>
<sequence>MGDKMDMSLDDIIKLNRSQRPAGRGRGGGRGARGGSARGGAGGRIGGGRGGGGGGAAGGGGPMRSRPVLTRGGRNRPAPYSRPKQLPDKWQHDLFDSGFGTGAGMETGGKLLVSNLDFGVSDADIQELFAEFGTLKKAAVHYDRSGRSLGTADVHFERKADALKAMKQYNGVPLDGRPMNIQLVTSQIEAQRRPIQSQSRGGGITRPRGGAIGFSGANRRGGRGGNRGRGRGAGRNPKQQLSAEELDAQLDAYNARMDTS</sequence>